<accession>Q5RCG9</accession>
<comment type="function">
    <text evidence="1">Binds specifically to cytosolic chaperonin (c-CPN) and transfers target proteins to it. Binds to nascent polypeptide chain and promotes folding in an environment in which there are many competing pathways for nonnative proteins (By similarity).</text>
</comment>
<comment type="subunit">
    <text evidence="1">Heterohexamer of two PFD-alpha type and four PFD-beta type subunits. Binds to the C-terminal part of VHL (By similarity).</text>
</comment>
<comment type="subcellular location">
    <subcellularLocation>
        <location evidence="1">Cytoplasm</location>
    </subcellularLocation>
    <subcellularLocation>
        <location evidence="1">Nucleus</location>
    </subcellularLocation>
    <text evidence="1">In complex with VHL can translocate to the nucleus.</text>
</comment>
<comment type="similarity">
    <text evidence="3">Belongs to the prefoldin subunit alpha family.</text>
</comment>
<organism>
    <name type="scientific">Pongo abelii</name>
    <name type="common">Sumatran orangutan</name>
    <name type="synonym">Pongo pygmaeus abelii</name>
    <dbReference type="NCBI Taxonomy" id="9601"/>
    <lineage>
        <taxon>Eukaryota</taxon>
        <taxon>Metazoa</taxon>
        <taxon>Chordata</taxon>
        <taxon>Craniata</taxon>
        <taxon>Vertebrata</taxon>
        <taxon>Euteleostomi</taxon>
        <taxon>Mammalia</taxon>
        <taxon>Eutheria</taxon>
        <taxon>Euarchontoglires</taxon>
        <taxon>Primates</taxon>
        <taxon>Haplorrhini</taxon>
        <taxon>Catarrhini</taxon>
        <taxon>Hominidae</taxon>
        <taxon>Pongo</taxon>
    </lineage>
</organism>
<name>PFD3_PONAB</name>
<reference key="1">
    <citation type="submission" date="2004-11" db="EMBL/GenBank/DDBJ databases">
        <authorList>
            <consortium name="The German cDNA consortium"/>
        </authorList>
    </citation>
    <scope>NUCLEOTIDE SEQUENCE [LARGE SCALE MRNA]</scope>
    <source>
        <tissue>Kidney</tissue>
    </source>
</reference>
<proteinExistence type="evidence at transcript level"/>
<protein>
    <recommendedName>
        <fullName>Prefoldin subunit 3</fullName>
    </recommendedName>
    <alternativeName>
        <fullName>von Hippel-Lindau-binding protein 1</fullName>
        <shortName>VBP-1</shortName>
        <shortName>VHL-binding protein 1</shortName>
    </alternativeName>
</protein>
<evidence type="ECO:0000250" key="1"/>
<evidence type="ECO:0000250" key="2">
    <source>
        <dbReference type="UniProtKB" id="P61758"/>
    </source>
</evidence>
<evidence type="ECO:0000305" key="3"/>
<keyword id="KW-0007">Acetylation</keyword>
<keyword id="KW-0143">Chaperone</keyword>
<keyword id="KW-0963">Cytoplasm</keyword>
<keyword id="KW-0539">Nucleus</keyword>
<keyword id="KW-1185">Reference proteome</keyword>
<dbReference type="EMBL" id="CR858301">
    <property type="protein sequence ID" value="CAH90538.1"/>
    <property type="molecule type" value="mRNA"/>
</dbReference>
<dbReference type="RefSeq" id="NP_001129019.1">
    <property type="nucleotide sequence ID" value="NM_001135547.1"/>
</dbReference>
<dbReference type="SMR" id="Q5RCG9"/>
<dbReference type="FunCoup" id="Q5RCG9">
    <property type="interactions" value="2257"/>
</dbReference>
<dbReference type="STRING" id="9601.ENSPPYP00000023400"/>
<dbReference type="Ensembl" id="ENSPPYT00000024378.3">
    <property type="protein sequence ID" value="ENSPPYP00000023400.2"/>
    <property type="gene ID" value="ENSPPYG00000020900.3"/>
</dbReference>
<dbReference type="GeneID" id="100190860"/>
<dbReference type="KEGG" id="pon:100190860"/>
<dbReference type="CTD" id="7411"/>
<dbReference type="eggNOG" id="KOG3313">
    <property type="taxonomic scope" value="Eukaryota"/>
</dbReference>
<dbReference type="GeneTree" id="ENSGT00390000018904"/>
<dbReference type="HOGENOM" id="CLU_083737_1_0_1"/>
<dbReference type="InParanoid" id="Q5RCG9"/>
<dbReference type="OMA" id="YNWDVAQ"/>
<dbReference type="OrthoDB" id="6375174at2759"/>
<dbReference type="TreeFam" id="TF313706"/>
<dbReference type="Proteomes" id="UP000001595">
    <property type="component" value="Chromosome X"/>
</dbReference>
<dbReference type="GO" id="GO:0005829">
    <property type="term" value="C:cytosol"/>
    <property type="evidence" value="ECO:0007669"/>
    <property type="project" value="Ensembl"/>
</dbReference>
<dbReference type="GO" id="GO:0005634">
    <property type="term" value="C:nucleus"/>
    <property type="evidence" value="ECO:0007669"/>
    <property type="project" value="UniProtKB-SubCell"/>
</dbReference>
<dbReference type="GO" id="GO:0016272">
    <property type="term" value="C:prefoldin complex"/>
    <property type="evidence" value="ECO:0007669"/>
    <property type="project" value="Ensembl"/>
</dbReference>
<dbReference type="GO" id="GO:0001540">
    <property type="term" value="F:amyloid-beta binding"/>
    <property type="evidence" value="ECO:0007669"/>
    <property type="project" value="Ensembl"/>
</dbReference>
<dbReference type="GO" id="GO:0015631">
    <property type="term" value="F:tubulin binding"/>
    <property type="evidence" value="ECO:0007669"/>
    <property type="project" value="TreeGrafter"/>
</dbReference>
<dbReference type="GO" id="GO:0051082">
    <property type="term" value="F:unfolded protein binding"/>
    <property type="evidence" value="ECO:0007669"/>
    <property type="project" value="Ensembl"/>
</dbReference>
<dbReference type="GO" id="GO:0007017">
    <property type="term" value="P:microtubule-based process"/>
    <property type="evidence" value="ECO:0007669"/>
    <property type="project" value="TreeGrafter"/>
</dbReference>
<dbReference type="GO" id="GO:1905907">
    <property type="term" value="P:negative regulation of amyloid fibril formation"/>
    <property type="evidence" value="ECO:0007669"/>
    <property type="project" value="Ensembl"/>
</dbReference>
<dbReference type="GO" id="GO:0006457">
    <property type="term" value="P:protein folding"/>
    <property type="evidence" value="ECO:0007669"/>
    <property type="project" value="Ensembl"/>
</dbReference>
<dbReference type="GO" id="GO:0007021">
    <property type="term" value="P:tubulin complex assembly"/>
    <property type="evidence" value="ECO:0007669"/>
    <property type="project" value="TreeGrafter"/>
</dbReference>
<dbReference type="CDD" id="cd23156">
    <property type="entry name" value="Prefoldin_3"/>
    <property type="match status" value="1"/>
</dbReference>
<dbReference type="FunFam" id="1.10.287.370:FF:000001">
    <property type="entry name" value="Prefoldin subunit 3"/>
    <property type="match status" value="1"/>
</dbReference>
<dbReference type="Gene3D" id="1.10.287.370">
    <property type="match status" value="1"/>
</dbReference>
<dbReference type="InterPro" id="IPR016655">
    <property type="entry name" value="PFD3"/>
</dbReference>
<dbReference type="InterPro" id="IPR009053">
    <property type="entry name" value="Prefoldin"/>
</dbReference>
<dbReference type="InterPro" id="IPR004127">
    <property type="entry name" value="Prefoldin_subunit_alpha"/>
</dbReference>
<dbReference type="PANTHER" id="PTHR12409">
    <property type="entry name" value="PREFOLDIN SUBUNIT 3"/>
    <property type="match status" value="1"/>
</dbReference>
<dbReference type="PANTHER" id="PTHR12409:SF0">
    <property type="entry name" value="PREFOLDIN SUBUNIT 3"/>
    <property type="match status" value="1"/>
</dbReference>
<dbReference type="Pfam" id="PF02996">
    <property type="entry name" value="Prefoldin"/>
    <property type="match status" value="1"/>
</dbReference>
<dbReference type="PIRSF" id="PIRSF016396">
    <property type="entry name" value="Prefoldin_subunit_3"/>
    <property type="match status" value="1"/>
</dbReference>
<dbReference type="SUPFAM" id="SSF46579">
    <property type="entry name" value="Prefoldin"/>
    <property type="match status" value="1"/>
</dbReference>
<gene>
    <name type="primary">VBP1</name>
    <name type="synonym">PFDN3</name>
</gene>
<sequence length="197" mass="22626">MAAVKDSCGKGEMATGNGRRLHLGIPEAVFVEDVDSFMKQPGNETADTVLKKLDEQYQKYKFMELNLAQKKRRLKGQIPEIKQTLEILKYMQKKKESTNSMETRFLLADNLYCKASVPPTDKVCLWLGANVMLEYDIDEAQALLEKNLSTATKNLDSLEEDLDFLRDQFTTTEVNMARVYNWDVKRRNKDDSTKNKA</sequence>
<feature type="initiator methionine" description="Removed" evidence="2">
    <location>
        <position position="1"/>
    </location>
</feature>
<feature type="chain" id="PRO_0000153654" description="Prefoldin subunit 3">
    <location>
        <begin position="2"/>
        <end position="197"/>
    </location>
</feature>
<feature type="modified residue" description="N-acetylalanine" evidence="2">
    <location>
        <position position="2"/>
    </location>
</feature>
<feature type="modified residue" description="N6-acetyllysine" evidence="2">
    <location>
        <position position="59"/>
    </location>
</feature>